<evidence type="ECO:0000255" key="1">
    <source>
        <dbReference type="HAMAP-Rule" id="MF_01261"/>
    </source>
</evidence>
<name>CCA_XYLF2</name>
<comment type="function">
    <text evidence="1">Catalyzes the addition and repair of the essential 3'-terminal CCA sequence in tRNAs without using a nucleic acid template. Adds these three nucleotides in the order of C, C, and A to the tRNA nucleotide-73, using CTP and ATP as substrates and producing inorganic pyrophosphate. tRNA 3'-terminal CCA addition is required both for tRNA processing and repair. Also involved in tRNA surveillance by mediating tandem CCA addition to generate a CCACCA at the 3' terminus of unstable tRNAs. While stable tRNAs receive only 3'-terminal CCA, unstable tRNAs are marked with CCACCA and rapidly degraded.</text>
</comment>
<comment type="catalytic activity">
    <reaction evidence="1">
        <text>a tRNA precursor + 2 CTP + ATP = a tRNA with a 3' CCA end + 3 diphosphate</text>
        <dbReference type="Rhea" id="RHEA:14433"/>
        <dbReference type="Rhea" id="RHEA-COMP:10465"/>
        <dbReference type="Rhea" id="RHEA-COMP:10468"/>
        <dbReference type="ChEBI" id="CHEBI:30616"/>
        <dbReference type="ChEBI" id="CHEBI:33019"/>
        <dbReference type="ChEBI" id="CHEBI:37563"/>
        <dbReference type="ChEBI" id="CHEBI:74896"/>
        <dbReference type="ChEBI" id="CHEBI:83071"/>
        <dbReference type="EC" id="2.7.7.72"/>
    </reaction>
</comment>
<comment type="catalytic activity">
    <reaction evidence="1">
        <text>a tRNA with a 3' CCA end + 2 CTP + ATP = a tRNA with a 3' CCACCA end + 3 diphosphate</text>
        <dbReference type="Rhea" id="RHEA:76235"/>
        <dbReference type="Rhea" id="RHEA-COMP:10468"/>
        <dbReference type="Rhea" id="RHEA-COMP:18655"/>
        <dbReference type="ChEBI" id="CHEBI:30616"/>
        <dbReference type="ChEBI" id="CHEBI:33019"/>
        <dbReference type="ChEBI" id="CHEBI:37563"/>
        <dbReference type="ChEBI" id="CHEBI:83071"/>
        <dbReference type="ChEBI" id="CHEBI:195187"/>
    </reaction>
    <physiologicalReaction direction="left-to-right" evidence="1">
        <dbReference type="Rhea" id="RHEA:76236"/>
    </physiologicalReaction>
</comment>
<comment type="cofactor">
    <cofactor evidence="1">
        <name>Mg(2+)</name>
        <dbReference type="ChEBI" id="CHEBI:18420"/>
    </cofactor>
    <text evidence="1">Magnesium is required for nucleotidyltransferase activity.</text>
</comment>
<comment type="cofactor">
    <cofactor evidence="1">
        <name>Ni(2+)</name>
        <dbReference type="ChEBI" id="CHEBI:49786"/>
    </cofactor>
    <text evidence="1">Nickel for phosphatase activity.</text>
</comment>
<comment type="subunit">
    <text evidence="1">Monomer. Can also form homodimers and oligomers.</text>
</comment>
<comment type="domain">
    <text evidence="1">Comprises two domains: an N-terminal domain containing the nucleotidyltransferase activity and a C-terminal HD domain associated with both phosphodiesterase and phosphatase activities.</text>
</comment>
<comment type="miscellaneous">
    <text evidence="1">A single active site specifically recognizes both ATP and CTP and is responsible for their addition.</text>
</comment>
<comment type="similarity">
    <text evidence="1">Belongs to the tRNA nucleotidyltransferase/poly(A) polymerase family. Bacterial CCA-adding enzyme type 1 subfamily.</text>
</comment>
<organism>
    <name type="scientific">Xylella fastidiosa (strain M23)</name>
    <dbReference type="NCBI Taxonomy" id="405441"/>
    <lineage>
        <taxon>Bacteria</taxon>
        <taxon>Pseudomonadati</taxon>
        <taxon>Pseudomonadota</taxon>
        <taxon>Gammaproteobacteria</taxon>
        <taxon>Lysobacterales</taxon>
        <taxon>Lysobacteraceae</taxon>
        <taxon>Xylella</taxon>
    </lineage>
</organism>
<feature type="chain" id="PRO_1000140060" description="Multifunctional CCA protein">
    <location>
        <begin position="1"/>
        <end position="416"/>
    </location>
</feature>
<feature type="domain" description="HD" evidence="1">
    <location>
        <begin position="229"/>
        <end position="331"/>
    </location>
</feature>
<feature type="binding site" evidence="1">
    <location>
        <position position="8"/>
    </location>
    <ligand>
        <name>ATP</name>
        <dbReference type="ChEBI" id="CHEBI:30616"/>
    </ligand>
</feature>
<feature type="binding site" evidence="1">
    <location>
        <position position="8"/>
    </location>
    <ligand>
        <name>CTP</name>
        <dbReference type="ChEBI" id="CHEBI:37563"/>
    </ligand>
</feature>
<feature type="binding site" evidence="1">
    <location>
        <position position="11"/>
    </location>
    <ligand>
        <name>ATP</name>
        <dbReference type="ChEBI" id="CHEBI:30616"/>
    </ligand>
</feature>
<feature type="binding site" evidence="1">
    <location>
        <position position="11"/>
    </location>
    <ligand>
        <name>CTP</name>
        <dbReference type="ChEBI" id="CHEBI:37563"/>
    </ligand>
</feature>
<feature type="binding site" evidence="1">
    <location>
        <position position="21"/>
    </location>
    <ligand>
        <name>Mg(2+)</name>
        <dbReference type="ChEBI" id="CHEBI:18420"/>
    </ligand>
</feature>
<feature type="binding site" evidence="1">
    <location>
        <position position="23"/>
    </location>
    <ligand>
        <name>Mg(2+)</name>
        <dbReference type="ChEBI" id="CHEBI:18420"/>
    </ligand>
</feature>
<feature type="binding site" evidence="1">
    <location>
        <position position="91"/>
    </location>
    <ligand>
        <name>ATP</name>
        <dbReference type="ChEBI" id="CHEBI:30616"/>
    </ligand>
</feature>
<feature type="binding site" evidence="1">
    <location>
        <position position="91"/>
    </location>
    <ligand>
        <name>CTP</name>
        <dbReference type="ChEBI" id="CHEBI:37563"/>
    </ligand>
</feature>
<feature type="binding site" evidence="1">
    <location>
        <position position="138"/>
    </location>
    <ligand>
        <name>ATP</name>
        <dbReference type="ChEBI" id="CHEBI:30616"/>
    </ligand>
</feature>
<feature type="binding site" evidence="1">
    <location>
        <position position="138"/>
    </location>
    <ligand>
        <name>CTP</name>
        <dbReference type="ChEBI" id="CHEBI:37563"/>
    </ligand>
</feature>
<feature type="binding site" evidence="1">
    <location>
        <position position="141"/>
    </location>
    <ligand>
        <name>ATP</name>
        <dbReference type="ChEBI" id="CHEBI:30616"/>
    </ligand>
</feature>
<feature type="binding site" evidence="1">
    <location>
        <position position="141"/>
    </location>
    <ligand>
        <name>CTP</name>
        <dbReference type="ChEBI" id="CHEBI:37563"/>
    </ligand>
</feature>
<sequence>MKSYLVGGAVRDALLGQPAGDCDWVVVGADPAHMKSLGFKPVGRDFPVFLHPKTGEEFALARTERKNGHGYRGFIVNADPTVTLEQDLQRRDFTINAIARDQTNGTLIDPYGGVNDLEQRVLRHISPAFAEDPLRVLRAARFMARLAPLGFSIAPETLAMMRQMAANGELNSLIPERIWKELSRSLTYTQPAAFLHTLRTVNALEVVLPELNALYGVPQHADYHPEIDTGLHQELVSDIAAKLAPGDMLIGFAALCHDLGKALTPRATWPHHPMHEQRGMAPTQQLSERLKVPRNYQQLALIACREHLNVHRLSKLHDNTVYELLQRCDAFRRPERIAQLAIVCEADYRGRYGHEDANYPQGQHLCRLHAAALAINARDLNRQDLHGTQIGEALAQARIRAISSAGVYDGGTGTNF</sequence>
<proteinExistence type="inferred from homology"/>
<dbReference type="EC" id="2.7.7.72" evidence="1"/>
<dbReference type="EC" id="3.1.3.-" evidence="1"/>
<dbReference type="EC" id="3.1.4.-" evidence="1"/>
<dbReference type="EMBL" id="CP001011">
    <property type="protein sequence ID" value="ACB92074.1"/>
    <property type="molecule type" value="Genomic_DNA"/>
</dbReference>
<dbReference type="RefSeq" id="WP_004090647.1">
    <property type="nucleotide sequence ID" value="NC_010577.1"/>
</dbReference>
<dbReference type="SMR" id="B2I9I0"/>
<dbReference type="KEGG" id="xfn:XfasM23_0632"/>
<dbReference type="HOGENOM" id="CLU_015961_1_1_6"/>
<dbReference type="Proteomes" id="UP000001698">
    <property type="component" value="Chromosome"/>
</dbReference>
<dbReference type="GO" id="GO:0005524">
    <property type="term" value="F:ATP binding"/>
    <property type="evidence" value="ECO:0007669"/>
    <property type="project" value="UniProtKB-UniRule"/>
</dbReference>
<dbReference type="GO" id="GO:0004810">
    <property type="term" value="F:CCA tRNA nucleotidyltransferase activity"/>
    <property type="evidence" value="ECO:0007669"/>
    <property type="project" value="UniProtKB-UniRule"/>
</dbReference>
<dbReference type="GO" id="GO:0004112">
    <property type="term" value="F:cyclic-nucleotide phosphodiesterase activity"/>
    <property type="evidence" value="ECO:0007669"/>
    <property type="project" value="UniProtKB-UniRule"/>
</dbReference>
<dbReference type="GO" id="GO:0000287">
    <property type="term" value="F:magnesium ion binding"/>
    <property type="evidence" value="ECO:0007669"/>
    <property type="project" value="UniProtKB-UniRule"/>
</dbReference>
<dbReference type="GO" id="GO:0016791">
    <property type="term" value="F:phosphatase activity"/>
    <property type="evidence" value="ECO:0007669"/>
    <property type="project" value="UniProtKB-UniRule"/>
</dbReference>
<dbReference type="GO" id="GO:0000049">
    <property type="term" value="F:tRNA binding"/>
    <property type="evidence" value="ECO:0007669"/>
    <property type="project" value="UniProtKB-UniRule"/>
</dbReference>
<dbReference type="GO" id="GO:0042245">
    <property type="term" value="P:RNA repair"/>
    <property type="evidence" value="ECO:0007669"/>
    <property type="project" value="UniProtKB-KW"/>
</dbReference>
<dbReference type="GO" id="GO:0001680">
    <property type="term" value="P:tRNA 3'-terminal CCA addition"/>
    <property type="evidence" value="ECO:0007669"/>
    <property type="project" value="UniProtKB-UniRule"/>
</dbReference>
<dbReference type="CDD" id="cd05398">
    <property type="entry name" value="NT_ClassII-CCAase"/>
    <property type="match status" value="1"/>
</dbReference>
<dbReference type="Gene3D" id="3.30.460.10">
    <property type="entry name" value="Beta Polymerase, domain 2"/>
    <property type="match status" value="1"/>
</dbReference>
<dbReference type="Gene3D" id="1.10.3090.10">
    <property type="entry name" value="cca-adding enzyme, domain 2"/>
    <property type="match status" value="1"/>
</dbReference>
<dbReference type="HAMAP" id="MF_01261">
    <property type="entry name" value="CCA_bact_type1"/>
    <property type="match status" value="1"/>
</dbReference>
<dbReference type="InterPro" id="IPR012006">
    <property type="entry name" value="CCA_bact"/>
</dbReference>
<dbReference type="InterPro" id="IPR006674">
    <property type="entry name" value="HD_domain"/>
</dbReference>
<dbReference type="InterPro" id="IPR043519">
    <property type="entry name" value="NT_sf"/>
</dbReference>
<dbReference type="InterPro" id="IPR002646">
    <property type="entry name" value="PolA_pol_head_dom"/>
</dbReference>
<dbReference type="InterPro" id="IPR032828">
    <property type="entry name" value="PolyA_RNA-bd"/>
</dbReference>
<dbReference type="InterPro" id="IPR050124">
    <property type="entry name" value="tRNA_CCA-adding_enzyme"/>
</dbReference>
<dbReference type="NCBIfam" id="NF008137">
    <property type="entry name" value="PRK10885.1"/>
    <property type="match status" value="1"/>
</dbReference>
<dbReference type="PANTHER" id="PTHR47545">
    <property type="entry name" value="MULTIFUNCTIONAL CCA PROTEIN"/>
    <property type="match status" value="1"/>
</dbReference>
<dbReference type="PANTHER" id="PTHR47545:SF1">
    <property type="entry name" value="MULTIFUNCTIONAL CCA PROTEIN"/>
    <property type="match status" value="1"/>
</dbReference>
<dbReference type="Pfam" id="PF01743">
    <property type="entry name" value="PolyA_pol"/>
    <property type="match status" value="1"/>
</dbReference>
<dbReference type="Pfam" id="PF12627">
    <property type="entry name" value="PolyA_pol_RNAbd"/>
    <property type="match status" value="1"/>
</dbReference>
<dbReference type="PIRSF" id="PIRSF000813">
    <property type="entry name" value="CCA_bact"/>
    <property type="match status" value="1"/>
</dbReference>
<dbReference type="SUPFAM" id="SSF81301">
    <property type="entry name" value="Nucleotidyltransferase"/>
    <property type="match status" value="1"/>
</dbReference>
<dbReference type="SUPFAM" id="SSF81891">
    <property type="entry name" value="Poly A polymerase C-terminal region-like"/>
    <property type="match status" value="1"/>
</dbReference>
<dbReference type="PROSITE" id="PS51831">
    <property type="entry name" value="HD"/>
    <property type="match status" value="1"/>
</dbReference>
<gene>
    <name evidence="1" type="primary">cca</name>
    <name type="ordered locus">XfasM23_0632</name>
</gene>
<keyword id="KW-0067">ATP-binding</keyword>
<keyword id="KW-0378">Hydrolase</keyword>
<keyword id="KW-0460">Magnesium</keyword>
<keyword id="KW-0479">Metal-binding</keyword>
<keyword id="KW-0511">Multifunctional enzyme</keyword>
<keyword id="KW-0533">Nickel</keyword>
<keyword id="KW-0547">Nucleotide-binding</keyword>
<keyword id="KW-0548">Nucleotidyltransferase</keyword>
<keyword id="KW-0692">RNA repair</keyword>
<keyword id="KW-0694">RNA-binding</keyword>
<keyword id="KW-0808">Transferase</keyword>
<keyword id="KW-0819">tRNA processing</keyword>
<accession>B2I9I0</accession>
<protein>
    <recommendedName>
        <fullName evidence="1">Multifunctional CCA protein</fullName>
    </recommendedName>
    <domain>
        <recommendedName>
            <fullName evidence="1">CCA-adding enzyme</fullName>
            <ecNumber evidence="1">2.7.7.72</ecNumber>
        </recommendedName>
        <alternativeName>
            <fullName evidence="1">CCA tRNA nucleotidyltransferase</fullName>
        </alternativeName>
        <alternativeName>
            <fullName evidence="1">tRNA CCA-pyrophosphorylase</fullName>
        </alternativeName>
        <alternativeName>
            <fullName evidence="1">tRNA adenylyl-/cytidylyl-transferase</fullName>
        </alternativeName>
        <alternativeName>
            <fullName evidence="1">tRNA nucleotidyltransferase</fullName>
        </alternativeName>
        <alternativeName>
            <fullName evidence="1">tRNA-NT</fullName>
        </alternativeName>
    </domain>
    <domain>
        <recommendedName>
            <fullName evidence="1">2'-nucleotidase</fullName>
            <ecNumber evidence="1">3.1.3.-</ecNumber>
        </recommendedName>
    </domain>
    <domain>
        <recommendedName>
            <fullName evidence="1">2',3'-cyclic phosphodiesterase</fullName>
            <ecNumber evidence="1">3.1.4.-</ecNumber>
        </recommendedName>
    </domain>
    <domain>
        <recommendedName>
            <fullName evidence="1">Phosphatase</fullName>
            <ecNumber evidence="1">3.1.3.-</ecNumber>
        </recommendedName>
    </domain>
</protein>
<reference key="1">
    <citation type="journal article" date="2010" name="J. Bacteriol.">
        <title>Whole genome sequences of two Xylella fastidiosa strains (M12 and M23) causing almond leaf scorch disease in California.</title>
        <authorList>
            <person name="Chen J."/>
            <person name="Xie G."/>
            <person name="Han S."/>
            <person name="Chertkov O."/>
            <person name="Sims D."/>
            <person name="Civerolo E.L."/>
        </authorList>
    </citation>
    <scope>NUCLEOTIDE SEQUENCE [LARGE SCALE GENOMIC DNA]</scope>
    <source>
        <strain>M23</strain>
    </source>
</reference>